<evidence type="ECO:0000250" key="1"/>
<evidence type="ECO:0000255" key="2">
    <source>
        <dbReference type="PROSITE-ProRule" id="PRU00465"/>
    </source>
</evidence>
<evidence type="ECO:0000255" key="3">
    <source>
        <dbReference type="PROSITE-ProRule" id="PRU00711"/>
    </source>
</evidence>
<evidence type="ECO:0000255" key="4">
    <source>
        <dbReference type="PROSITE-ProRule" id="PRU01004"/>
    </source>
</evidence>
<evidence type="ECO:0000255" key="5">
    <source>
        <dbReference type="PROSITE-ProRule" id="PRU01184"/>
    </source>
</evidence>
<evidence type="ECO:0000305" key="6"/>
<dbReference type="EC" id="1.-.-.-"/>
<dbReference type="EMBL" id="AF015825">
    <property type="protein sequence ID" value="AAC46312.1"/>
    <property type="molecule type" value="Genomic_DNA"/>
</dbReference>
<dbReference type="EMBL" id="AL009126">
    <property type="protein sequence ID" value="CAB13073.1"/>
    <property type="molecule type" value="Genomic_DNA"/>
</dbReference>
<dbReference type="PIR" id="E69850">
    <property type="entry name" value="E69850"/>
</dbReference>
<dbReference type="RefSeq" id="NP_389098.1">
    <property type="nucleotide sequence ID" value="NC_000964.3"/>
</dbReference>
<dbReference type="SMR" id="O34720"/>
<dbReference type="FunCoup" id="O34720">
    <property type="interactions" value="660"/>
</dbReference>
<dbReference type="IntAct" id="O34720">
    <property type="interactions" value="1"/>
</dbReference>
<dbReference type="STRING" id="224308.BSU12160"/>
<dbReference type="PaxDb" id="224308-BSU12160"/>
<dbReference type="EnsemblBacteria" id="CAB13073">
    <property type="protein sequence ID" value="CAB13073"/>
    <property type="gene ID" value="BSU_12160"/>
</dbReference>
<dbReference type="GeneID" id="939396"/>
<dbReference type="KEGG" id="bsu:BSU12160"/>
<dbReference type="PATRIC" id="fig|224308.179.peg.1314"/>
<dbReference type="eggNOG" id="COG3383">
    <property type="taxonomic scope" value="Bacteria"/>
</dbReference>
<dbReference type="InParanoid" id="O34720"/>
<dbReference type="OrthoDB" id="9805142at2"/>
<dbReference type="PhylomeDB" id="O34720"/>
<dbReference type="BioCyc" id="BSUB:BSU12160-MONOMER"/>
<dbReference type="Proteomes" id="UP000001570">
    <property type="component" value="Chromosome"/>
</dbReference>
<dbReference type="GO" id="GO:0016020">
    <property type="term" value="C:membrane"/>
    <property type="evidence" value="ECO:0000318"/>
    <property type="project" value="GO_Central"/>
</dbReference>
<dbReference type="GO" id="GO:0051537">
    <property type="term" value="F:2 iron, 2 sulfur cluster binding"/>
    <property type="evidence" value="ECO:0007669"/>
    <property type="project" value="UniProtKB-KW"/>
</dbReference>
<dbReference type="GO" id="GO:0051539">
    <property type="term" value="F:4 iron, 4 sulfur cluster binding"/>
    <property type="evidence" value="ECO:0007669"/>
    <property type="project" value="UniProtKB-KW"/>
</dbReference>
<dbReference type="GO" id="GO:0008863">
    <property type="term" value="F:formate dehydrogenase (NAD+) activity"/>
    <property type="evidence" value="ECO:0007669"/>
    <property type="project" value="InterPro"/>
</dbReference>
<dbReference type="GO" id="GO:0046872">
    <property type="term" value="F:metal ion binding"/>
    <property type="evidence" value="ECO:0007669"/>
    <property type="project" value="UniProtKB-KW"/>
</dbReference>
<dbReference type="GO" id="GO:0043546">
    <property type="term" value="F:molybdopterin cofactor binding"/>
    <property type="evidence" value="ECO:0007669"/>
    <property type="project" value="InterPro"/>
</dbReference>
<dbReference type="GO" id="GO:0015942">
    <property type="term" value="P:formate metabolic process"/>
    <property type="evidence" value="ECO:0007669"/>
    <property type="project" value="InterPro"/>
</dbReference>
<dbReference type="GO" id="GO:0022904">
    <property type="term" value="P:respiratory electron transport chain"/>
    <property type="evidence" value="ECO:0000318"/>
    <property type="project" value="GO_Central"/>
</dbReference>
<dbReference type="CDD" id="cd02792">
    <property type="entry name" value="MopB_CT_Formate-Dh-Na-like"/>
    <property type="match status" value="1"/>
</dbReference>
<dbReference type="CDD" id="cd02753">
    <property type="entry name" value="MopB_Formate-Dh-H"/>
    <property type="match status" value="1"/>
</dbReference>
<dbReference type="FunFam" id="2.20.25.90:FF:000001">
    <property type="entry name" value="Formate dehydrogenase subunit alpha"/>
    <property type="match status" value="1"/>
</dbReference>
<dbReference type="FunFam" id="3.10.20.740:FF:000003">
    <property type="entry name" value="Formate dehydrogenase subunit alpha"/>
    <property type="match status" value="1"/>
</dbReference>
<dbReference type="FunFam" id="3.40.228.10:FF:000002">
    <property type="entry name" value="Formate dehydrogenase subunit alpha"/>
    <property type="match status" value="1"/>
</dbReference>
<dbReference type="FunFam" id="3.30.70.20:FF:000032">
    <property type="entry name" value="Formate dehydrogenase, alpha subunit"/>
    <property type="match status" value="1"/>
</dbReference>
<dbReference type="FunFam" id="2.40.40.20:FF:000005">
    <property type="entry name" value="Periplasmic nitrate reductase"/>
    <property type="match status" value="1"/>
</dbReference>
<dbReference type="Gene3D" id="2.40.40.20">
    <property type="match status" value="1"/>
</dbReference>
<dbReference type="Gene3D" id="3.10.20.740">
    <property type="match status" value="1"/>
</dbReference>
<dbReference type="Gene3D" id="3.30.70.20">
    <property type="match status" value="1"/>
</dbReference>
<dbReference type="Gene3D" id="3.40.50.740">
    <property type="match status" value="1"/>
</dbReference>
<dbReference type="Gene3D" id="2.20.25.90">
    <property type="entry name" value="ADC-like domains"/>
    <property type="match status" value="1"/>
</dbReference>
<dbReference type="Gene3D" id="3.40.228.10">
    <property type="entry name" value="Dimethylsulfoxide Reductase, domain 2"/>
    <property type="match status" value="1"/>
</dbReference>
<dbReference type="InterPro" id="IPR036010">
    <property type="entry name" value="2Fe-2S_ferredoxin-like_sf"/>
</dbReference>
<dbReference type="InterPro" id="IPR001041">
    <property type="entry name" value="2Fe-2S_ferredoxin-type"/>
</dbReference>
<dbReference type="InterPro" id="IPR017896">
    <property type="entry name" value="4Fe4S_Fe-S-bd"/>
</dbReference>
<dbReference type="InterPro" id="IPR017900">
    <property type="entry name" value="4Fe4S_Fe_S_CS"/>
</dbReference>
<dbReference type="InterPro" id="IPR009010">
    <property type="entry name" value="Asp_de-COase-like_dom_sf"/>
</dbReference>
<dbReference type="InterPro" id="IPR041924">
    <property type="entry name" value="Formate_Dh-H_N"/>
</dbReference>
<dbReference type="InterPro" id="IPR006478">
    <property type="entry name" value="Formate_DH_asu"/>
</dbReference>
<dbReference type="InterPro" id="IPR006657">
    <property type="entry name" value="MoPterin_dinucl-bd_dom"/>
</dbReference>
<dbReference type="InterPro" id="IPR006656">
    <property type="entry name" value="Mopterin_OxRdtase"/>
</dbReference>
<dbReference type="InterPro" id="IPR006963">
    <property type="entry name" value="Mopterin_OxRdtase_4Fe-4S_dom"/>
</dbReference>
<dbReference type="InterPro" id="IPR019574">
    <property type="entry name" value="NADH_UbQ_OxRdtase_Gsu_4Fe4S-bd"/>
</dbReference>
<dbReference type="InterPro" id="IPR050123">
    <property type="entry name" value="Prok_molybdopt-oxidoreductase"/>
</dbReference>
<dbReference type="NCBIfam" id="TIGR01591">
    <property type="entry name" value="Fdh-alpha"/>
    <property type="match status" value="1"/>
</dbReference>
<dbReference type="PANTHER" id="PTHR43105:SF14">
    <property type="entry name" value="FORMATE DEHYDROGENASE H"/>
    <property type="match status" value="1"/>
</dbReference>
<dbReference type="PANTHER" id="PTHR43105">
    <property type="entry name" value="RESPIRATORY NITRATE REDUCTASE"/>
    <property type="match status" value="1"/>
</dbReference>
<dbReference type="Pfam" id="PF13510">
    <property type="entry name" value="Fer2_4"/>
    <property type="match status" value="1"/>
</dbReference>
<dbReference type="Pfam" id="PF12838">
    <property type="entry name" value="Fer4_7"/>
    <property type="match status" value="1"/>
</dbReference>
<dbReference type="Pfam" id="PF04879">
    <property type="entry name" value="Molybdop_Fe4S4"/>
    <property type="match status" value="1"/>
</dbReference>
<dbReference type="Pfam" id="PF00384">
    <property type="entry name" value="Molybdopterin"/>
    <property type="match status" value="1"/>
</dbReference>
<dbReference type="Pfam" id="PF01568">
    <property type="entry name" value="Molydop_binding"/>
    <property type="match status" value="1"/>
</dbReference>
<dbReference type="Pfam" id="PF10588">
    <property type="entry name" value="NADH-G_4Fe-4S_3"/>
    <property type="match status" value="1"/>
</dbReference>
<dbReference type="PIRSF" id="PIRSF036643">
    <property type="entry name" value="FDH_alpha"/>
    <property type="match status" value="1"/>
</dbReference>
<dbReference type="SMART" id="SM00926">
    <property type="entry name" value="Molybdop_Fe4S4"/>
    <property type="match status" value="1"/>
</dbReference>
<dbReference type="SMART" id="SM00929">
    <property type="entry name" value="NADH-G_4Fe-4S_3"/>
    <property type="match status" value="1"/>
</dbReference>
<dbReference type="SUPFAM" id="SSF54292">
    <property type="entry name" value="2Fe-2S ferredoxin-like"/>
    <property type="match status" value="1"/>
</dbReference>
<dbReference type="SUPFAM" id="SSF54862">
    <property type="entry name" value="4Fe-4S ferredoxins"/>
    <property type="match status" value="1"/>
</dbReference>
<dbReference type="SUPFAM" id="SSF50692">
    <property type="entry name" value="ADC-like"/>
    <property type="match status" value="1"/>
</dbReference>
<dbReference type="SUPFAM" id="SSF53706">
    <property type="entry name" value="Formate dehydrogenase/DMSO reductase, domains 1-3"/>
    <property type="match status" value="1"/>
</dbReference>
<dbReference type="PROSITE" id="PS51085">
    <property type="entry name" value="2FE2S_FER_2"/>
    <property type="match status" value="1"/>
</dbReference>
<dbReference type="PROSITE" id="PS00198">
    <property type="entry name" value="4FE4S_FER_1"/>
    <property type="match status" value="1"/>
</dbReference>
<dbReference type="PROSITE" id="PS51379">
    <property type="entry name" value="4FE4S_FER_2"/>
    <property type="match status" value="2"/>
</dbReference>
<dbReference type="PROSITE" id="PS51839">
    <property type="entry name" value="4FE4S_HC3"/>
    <property type="match status" value="1"/>
</dbReference>
<dbReference type="PROSITE" id="PS51669">
    <property type="entry name" value="4FE4S_MOW_BIS_MGD"/>
    <property type="match status" value="1"/>
</dbReference>
<keyword id="KW-0001">2Fe-2S</keyword>
<keyword id="KW-0004">4Fe-4S</keyword>
<keyword id="KW-0408">Iron</keyword>
<keyword id="KW-0411">Iron-sulfur</keyword>
<keyword id="KW-0479">Metal-binding</keyword>
<keyword id="KW-0500">Molybdenum</keyword>
<keyword id="KW-0560">Oxidoreductase</keyword>
<keyword id="KW-1185">Reference proteome</keyword>
<keyword id="KW-0677">Repeat</keyword>
<accession>O34720</accession>
<accession>Q796P0</accession>
<protein>
    <recommendedName>
        <fullName>Probable oxidoreductase YjgC</fullName>
        <ecNumber>1.-.-.-</ecNumber>
    </recommendedName>
</protein>
<gene>
    <name type="primary">yjgC</name>
    <name type="ordered locus">BSU12160</name>
</gene>
<feature type="chain" id="PRO_0000380112" description="Probable oxidoreductase YjgC">
    <location>
        <begin position="1"/>
        <end position="985"/>
    </location>
</feature>
<feature type="domain" description="2Fe-2S ferredoxin-type" evidence="2">
    <location>
        <begin position="3"/>
        <end position="79"/>
    </location>
</feature>
<feature type="domain" description="4Fe-4S His(Cys)3-ligated-type" evidence="5">
    <location>
        <begin position="79"/>
        <end position="119"/>
    </location>
</feature>
<feature type="domain" description="4Fe-4S ferredoxin-type 1" evidence="3">
    <location>
        <begin position="139"/>
        <end position="170"/>
    </location>
</feature>
<feature type="domain" description="4Fe-4S ferredoxin-type 2" evidence="3">
    <location>
        <begin position="182"/>
        <end position="211"/>
    </location>
</feature>
<feature type="domain" description="4Fe-4S Mo/W bis-MGD-type" evidence="4">
    <location>
        <begin position="258"/>
        <end position="314"/>
    </location>
</feature>
<feature type="binding site" evidence="1">
    <location>
        <position position="37"/>
    </location>
    <ligand>
        <name>[2Fe-2S] cluster</name>
        <dbReference type="ChEBI" id="CHEBI:190135"/>
    </ligand>
</feature>
<feature type="binding site" evidence="1">
    <location>
        <position position="48"/>
    </location>
    <ligand>
        <name>[2Fe-2S] cluster</name>
        <dbReference type="ChEBI" id="CHEBI:190135"/>
    </ligand>
</feature>
<feature type="binding site" evidence="1">
    <location>
        <position position="51"/>
    </location>
    <ligand>
        <name>[2Fe-2S] cluster</name>
        <dbReference type="ChEBI" id="CHEBI:190135"/>
    </ligand>
</feature>
<feature type="binding site" evidence="1">
    <location>
        <position position="63"/>
    </location>
    <ligand>
        <name>[2Fe-2S] cluster</name>
        <dbReference type="ChEBI" id="CHEBI:190135"/>
    </ligand>
</feature>
<feature type="binding site" evidence="5">
    <location>
        <position position="95"/>
    </location>
    <ligand>
        <name>[4Fe-4S] cluster</name>
        <dbReference type="ChEBI" id="CHEBI:49883"/>
        <label>1</label>
    </ligand>
</feature>
<feature type="binding site" evidence="5">
    <location>
        <position position="99"/>
    </location>
    <ligand>
        <name>[4Fe-4S] cluster</name>
        <dbReference type="ChEBI" id="CHEBI:49883"/>
        <label>1</label>
    </ligand>
</feature>
<feature type="binding site" evidence="5">
    <location>
        <position position="102"/>
    </location>
    <ligand>
        <name>[4Fe-4S] cluster</name>
        <dbReference type="ChEBI" id="CHEBI:49883"/>
        <label>1</label>
    </ligand>
</feature>
<feature type="binding site" evidence="5">
    <location>
        <position position="109"/>
    </location>
    <ligand>
        <name>[4Fe-4S] cluster</name>
        <dbReference type="ChEBI" id="CHEBI:49883"/>
        <label>1</label>
    </ligand>
</feature>
<feature type="binding site" evidence="1">
    <location>
        <position position="148"/>
    </location>
    <ligand>
        <name>[4Fe-4S] cluster</name>
        <dbReference type="ChEBI" id="CHEBI:49883"/>
        <label>2</label>
    </ligand>
</feature>
<feature type="binding site" evidence="1">
    <location>
        <position position="151"/>
    </location>
    <ligand>
        <name>[4Fe-4S] cluster</name>
        <dbReference type="ChEBI" id="CHEBI:49883"/>
        <label>2</label>
    </ligand>
</feature>
<feature type="binding site" evidence="1">
    <location>
        <position position="154"/>
    </location>
    <ligand>
        <name>[4Fe-4S] cluster</name>
        <dbReference type="ChEBI" id="CHEBI:49883"/>
        <label>2</label>
    </ligand>
</feature>
<feature type="binding site" evidence="1">
    <location>
        <position position="158"/>
    </location>
    <ligand>
        <name>[4Fe-4S] cluster</name>
        <dbReference type="ChEBI" id="CHEBI:49883"/>
        <label>3</label>
    </ligand>
</feature>
<feature type="binding site" evidence="1">
    <location>
        <position position="191"/>
    </location>
    <ligand>
        <name>[4Fe-4S] cluster</name>
        <dbReference type="ChEBI" id="CHEBI:49883"/>
        <label>3</label>
    </ligand>
</feature>
<feature type="binding site" evidence="1">
    <location>
        <position position="194"/>
    </location>
    <ligand>
        <name>[4Fe-4S] cluster</name>
        <dbReference type="ChEBI" id="CHEBI:49883"/>
        <label>3</label>
    </ligand>
</feature>
<feature type="binding site" evidence="1">
    <location>
        <position position="197"/>
    </location>
    <ligand>
        <name>[4Fe-4S] cluster</name>
        <dbReference type="ChEBI" id="CHEBI:49883"/>
        <label>3</label>
    </ligand>
</feature>
<feature type="binding site" evidence="1">
    <location>
        <position position="201"/>
    </location>
    <ligand>
        <name>[4Fe-4S] cluster</name>
        <dbReference type="ChEBI" id="CHEBI:49883"/>
        <label>2</label>
    </ligand>
</feature>
<feature type="binding site" evidence="1">
    <location>
        <position position="265"/>
    </location>
    <ligand>
        <name>[4Fe-4S] cluster</name>
        <dbReference type="ChEBI" id="CHEBI:49883"/>
        <label>4</label>
    </ligand>
</feature>
<feature type="binding site" evidence="1">
    <location>
        <position position="268"/>
    </location>
    <ligand>
        <name>[4Fe-4S] cluster</name>
        <dbReference type="ChEBI" id="CHEBI:49883"/>
        <label>4</label>
    </ligand>
</feature>
<feature type="binding site" evidence="1">
    <location>
        <position position="272"/>
    </location>
    <ligand>
        <name>[4Fe-4S] cluster</name>
        <dbReference type="ChEBI" id="CHEBI:49883"/>
        <label>4</label>
    </ligand>
</feature>
<feature type="binding site" evidence="1">
    <location>
        <position position="300"/>
    </location>
    <ligand>
        <name>[4Fe-4S] cluster</name>
        <dbReference type="ChEBI" id="CHEBI:49883"/>
        <label>4</label>
    </ligand>
</feature>
<proteinExistence type="inferred from homology"/>
<sequence length="985" mass="109789">MAGKKTITINGVEMEASEEQTVLQLLNNSSIEVPQVCYHPSLGPIETCDTCIVSINGELKRSCSAELKDGDVIDTLSPDVKKAQVIGMDKILYNHELYCTVCDYNNGGCEIHNTVKEMKINHQSIPFDHKPYHKDESHPFYRYDPDQCILCGRCVEACQDVQVTETLTIDWERKRPRVIWDNDVPINESSCVSCGHCSTVCPCNAMMEKGMEGEAGYLTGINNETLRPMIEITKGVETGYGSILAISDMESAMRDERIKKTKTVCTYCGVGCSFDVWTKGRDILKVEPQEEAPANGISTCVKGKFGWDFVNSEERLTKPLIREGDHFREAEWEEALLLIASKFTELKEAFGPDSLAFITSSKCTNEESYLMQKLARGVIGTNNVDNCSRYCQSPATAGLFRTVGYGGDSGSITDIAQADLVLIIGSNTSESHPVLSTRIKRAHKLRGQKVIVADIRKHEMAERSDLFVQPRAGSDIVWLNAIAKYLIENGKADERFLRERVNGRDEYVKSLAPYTLEYAEEKTGIDQETLIQMAEMIGQADSVCALWAMGVTQHIGGSDTSTAISNLLLVTGNYGKPGAGSYPLRGHNNVQGASDFGSMPDRLPGYEKVTDEQVRQKYERVWGVPLPKEPGMTNHEMIEKIHSGQLKAMYVKGEEMGLVDSNINHVHAAYEKLDFFVVQDIFLSRTAEFADVVLPASPSLEKEGTFTNTERRIQRLYQVFEPLGESKPDWQIIMEVANKLGAGWLYEHPADIMEEAAKLSPIYAGVTYERLEGYNSLQWPVNADGKDSPLLFTERFPFPDGKAILYPVQWTEPKEFGEEYDIHVNNGRLLEHFHEGNLTYKSKGISEKTPEVFLEISPELAAERGIQDGTLVRLTSPFGNVKVKCLITDRVKGKEVYLPMNDSGEAAINLLTGSHADKDTDTPAYKETSAKMEILKHDGISPLPKINHRNGNPQPQIGVQVHKKWARKDYIFPGDAVKRGMGHNG</sequence>
<comment type="cofactor">
    <cofactor evidence="1">
        <name>[2Fe-2S] cluster</name>
        <dbReference type="ChEBI" id="CHEBI:190135"/>
    </cofactor>
    <text evidence="1">Binds 1 [2Fe-2S] cluster.</text>
</comment>
<comment type="cofactor">
    <cofactor evidence="1">
        <name>[4Fe-4S] cluster</name>
        <dbReference type="ChEBI" id="CHEBI:49883"/>
    </cofactor>
    <text evidence="1">Binds 4 [4Fe-4S] clusters.</text>
</comment>
<comment type="cofactor">
    <cofactor evidence="1">
        <name>Mo-bis(molybdopterin guanine dinucleotide)</name>
        <dbReference type="ChEBI" id="CHEBI:60539"/>
    </cofactor>
    <text evidence="1">Binds 1 molybdenum-bis(molybdopterin guanine dinucleotide) (Mo-bis-MGD) cofactor per subunit.</text>
</comment>
<comment type="similarity">
    <text evidence="6">In the C-terminal section; belongs to the prokaryotic molybdopterin-containing oxidoreductase family.</text>
</comment>
<organism>
    <name type="scientific">Bacillus subtilis (strain 168)</name>
    <dbReference type="NCBI Taxonomy" id="224308"/>
    <lineage>
        <taxon>Bacteria</taxon>
        <taxon>Bacillati</taxon>
        <taxon>Bacillota</taxon>
        <taxon>Bacilli</taxon>
        <taxon>Bacillales</taxon>
        <taxon>Bacillaceae</taxon>
        <taxon>Bacillus</taxon>
    </lineage>
</organism>
<name>YJGC_BACSU</name>
<reference key="1">
    <citation type="journal article" date="1998" name="Microbiology">
        <title>A 35.7 kb DNA fragment from the Bacillus subtilis chromosome containing a putative 12.3 kb operon involved in hexuronate catabolism and a perfectly symmetrical hypothetical catabolite-responsive element.</title>
        <authorList>
            <person name="Rivolta C."/>
            <person name="Soldo B."/>
            <person name="Lazarevic V."/>
            <person name="Joris B."/>
            <person name="Mauel C."/>
            <person name="Karamata D."/>
        </authorList>
    </citation>
    <scope>NUCLEOTIDE SEQUENCE [GENOMIC DNA]</scope>
    <source>
        <strain>168</strain>
    </source>
</reference>
<reference key="2">
    <citation type="journal article" date="1997" name="Nature">
        <title>The complete genome sequence of the Gram-positive bacterium Bacillus subtilis.</title>
        <authorList>
            <person name="Kunst F."/>
            <person name="Ogasawara N."/>
            <person name="Moszer I."/>
            <person name="Albertini A.M."/>
            <person name="Alloni G."/>
            <person name="Azevedo V."/>
            <person name="Bertero M.G."/>
            <person name="Bessieres P."/>
            <person name="Bolotin A."/>
            <person name="Borchert S."/>
            <person name="Borriss R."/>
            <person name="Boursier L."/>
            <person name="Brans A."/>
            <person name="Braun M."/>
            <person name="Brignell S.C."/>
            <person name="Bron S."/>
            <person name="Brouillet S."/>
            <person name="Bruschi C.V."/>
            <person name="Caldwell B."/>
            <person name="Capuano V."/>
            <person name="Carter N.M."/>
            <person name="Choi S.-K."/>
            <person name="Codani J.-J."/>
            <person name="Connerton I.F."/>
            <person name="Cummings N.J."/>
            <person name="Daniel R.A."/>
            <person name="Denizot F."/>
            <person name="Devine K.M."/>
            <person name="Duesterhoeft A."/>
            <person name="Ehrlich S.D."/>
            <person name="Emmerson P.T."/>
            <person name="Entian K.-D."/>
            <person name="Errington J."/>
            <person name="Fabret C."/>
            <person name="Ferrari E."/>
            <person name="Foulger D."/>
            <person name="Fritz C."/>
            <person name="Fujita M."/>
            <person name="Fujita Y."/>
            <person name="Fuma S."/>
            <person name="Galizzi A."/>
            <person name="Galleron N."/>
            <person name="Ghim S.-Y."/>
            <person name="Glaser P."/>
            <person name="Goffeau A."/>
            <person name="Golightly E.J."/>
            <person name="Grandi G."/>
            <person name="Guiseppi G."/>
            <person name="Guy B.J."/>
            <person name="Haga K."/>
            <person name="Haiech J."/>
            <person name="Harwood C.R."/>
            <person name="Henaut A."/>
            <person name="Hilbert H."/>
            <person name="Holsappel S."/>
            <person name="Hosono S."/>
            <person name="Hullo M.-F."/>
            <person name="Itaya M."/>
            <person name="Jones L.-M."/>
            <person name="Joris B."/>
            <person name="Karamata D."/>
            <person name="Kasahara Y."/>
            <person name="Klaerr-Blanchard M."/>
            <person name="Klein C."/>
            <person name="Kobayashi Y."/>
            <person name="Koetter P."/>
            <person name="Koningstein G."/>
            <person name="Krogh S."/>
            <person name="Kumano M."/>
            <person name="Kurita K."/>
            <person name="Lapidus A."/>
            <person name="Lardinois S."/>
            <person name="Lauber J."/>
            <person name="Lazarevic V."/>
            <person name="Lee S.-M."/>
            <person name="Levine A."/>
            <person name="Liu H."/>
            <person name="Masuda S."/>
            <person name="Mauel C."/>
            <person name="Medigue C."/>
            <person name="Medina N."/>
            <person name="Mellado R.P."/>
            <person name="Mizuno M."/>
            <person name="Moestl D."/>
            <person name="Nakai S."/>
            <person name="Noback M."/>
            <person name="Noone D."/>
            <person name="O'Reilly M."/>
            <person name="Ogawa K."/>
            <person name="Ogiwara A."/>
            <person name="Oudega B."/>
            <person name="Park S.-H."/>
            <person name="Parro V."/>
            <person name="Pohl T.M."/>
            <person name="Portetelle D."/>
            <person name="Porwollik S."/>
            <person name="Prescott A.M."/>
            <person name="Presecan E."/>
            <person name="Pujic P."/>
            <person name="Purnelle B."/>
            <person name="Rapoport G."/>
            <person name="Rey M."/>
            <person name="Reynolds S."/>
            <person name="Rieger M."/>
            <person name="Rivolta C."/>
            <person name="Rocha E."/>
            <person name="Roche B."/>
            <person name="Rose M."/>
            <person name="Sadaie Y."/>
            <person name="Sato T."/>
            <person name="Scanlan E."/>
            <person name="Schleich S."/>
            <person name="Schroeter R."/>
            <person name="Scoffone F."/>
            <person name="Sekiguchi J."/>
            <person name="Sekowska A."/>
            <person name="Seror S.J."/>
            <person name="Serror P."/>
            <person name="Shin B.-S."/>
            <person name="Soldo B."/>
            <person name="Sorokin A."/>
            <person name="Tacconi E."/>
            <person name="Takagi T."/>
            <person name="Takahashi H."/>
            <person name="Takemaru K."/>
            <person name="Takeuchi M."/>
            <person name="Tamakoshi A."/>
            <person name="Tanaka T."/>
            <person name="Terpstra P."/>
            <person name="Tognoni A."/>
            <person name="Tosato V."/>
            <person name="Uchiyama S."/>
            <person name="Vandenbol M."/>
            <person name="Vannier F."/>
            <person name="Vassarotti A."/>
            <person name="Viari A."/>
            <person name="Wambutt R."/>
            <person name="Wedler E."/>
            <person name="Wedler H."/>
            <person name="Weitzenegger T."/>
            <person name="Winters P."/>
            <person name="Wipat A."/>
            <person name="Yamamoto H."/>
            <person name="Yamane K."/>
            <person name="Yasumoto K."/>
            <person name="Yata K."/>
            <person name="Yoshida K."/>
            <person name="Yoshikawa H.-F."/>
            <person name="Zumstein E."/>
            <person name="Yoshikawa H."/>
            <person name="Danchin A."/>
        </authorList>
    </citation>
    <scope>NUCLEOTIDE SEQUENCE [LARGE SCALE GENOMIC DNA]</scope>
    <source>
        <strain>168</strain>
    </source>
</reference>